<keyword id="KW-0238">DNA-binding</keyword>
<keyword id="KW-1185">Reference proteome</keyword>
<keyword id="KW-0678">Repressor</keyword>
<keyword id="KW-0804">Transcription</keyword>
<keyword id="KW-0805">Transcription regulation</keyword>
<reference key="1">
    <citation type="journal article" date="2002" name="Proc. Natl. Acad. Sci. U.S.A.">
        <title>Extensive mosaic structure revealed by the complete genome sequence of uropathogenic Escherichia coli.</title>
        <authorList>
            <person name="Welch R.A."/>
            <person name="Burland V."/>
            <person name="Plunkett G. III"/>
            <person name="Redford P."/>
            <person name="Roesch P."/>
            <person name="Rasko D."/>
            <person name="Buckles E.L."/>
            <person name="Liou S.-R."/>
            <person name="Boutin A."/>
            <person name="Hackett J."/>
            <person name="Stroud D."/>
            <person name="Mayhew G.F."/>
            <person name="Rose D.J."/>
            <person name="Zhou S."/>
            <person name="Schwartz D.C."/>
            <person name="Perna N.T."/>
            <person name="Mobley H.L.T."/>
            <person name="Donnenberg M.S."/>
            <person name="Blattner F.R."/>
        </authorList>
    </citation>
    <scope>NUCLEOTIDE SEQUENCE [LARGE SCALE GENOMIC DNA]</scope>
    <source>
        <strain>CFT073 / ATCC 700928 / UPEC</strain>
    </source>
</reference>
<sequence>MDTELLKTFLEVSRTRHFGRAAESLYLTQSAVSFRIRQLENQLGVNLFTRHRNNIRLTAAGEKLLPYAETLMSTWQAARKEVAHTSRHNEFSIGASASLWECMLNQWLGRLYQNQDVHTGLQFEARIAQRQSLVKQLHERQLDLLITTEAPKMDEFCSQLLGYFTLALYTSAPSKLKGDLNYLRLEWGPDFQQHEAGLIGADEVPILTTSSAELAQQQIAMLNGCTWLPVSWARKKGGLHTVVDSTTLSRPLYAIWLQNSDKNALIRDLLKINVLDEVY</sequence>
<dbReference type="EMBL" id="AE014075">
    <property type="protein sequence ID" value="AAN83116.1"/>
    <property type="molecule type" value="Genomic_DNA"/>
</dbReference>
<dbReference type="RefSeq" id="WP_000379257.1">
    <property type="nucleotide sequence ID" value="NZ_CP051263.1"/>
</dbReference>
<dbReference type="SMR" id="P59369"/>
<dbReference type="STRING" id="199310.c4685"/>
<dbReference type="KEGG" id="ecc:c4685"/>
<dbReference type="eggNOG" id="COG0583">
    <property type="taxonomic scope" value="Bacteria"/>
</dbReference>
<dbReference type="HOGENOM" id="CLU_039613_8_2_6"/>
<dbReference type="BioCyc" id="ECOL199310:C4685-MONOMER"/>
<dbReference type="Proteomes" id="UP000001410">
    <property type="component" value="Chromosome"/>
</dbReference>
<dbReference type="GO" id="GO:0003677">
    <property type="term" value="F:DNA binding"/>
    <property type="evidence" value="ECO:0007669"/>
    <property type="project" value="UniProtKB-KW"/>
</dbReference>
<dbReference type="GO" id="GO:0003700">
    <property type="term" value="F:DNA-binding transcription factor activity"/>
    <property type="evidence" value="ECO:0007669"/>
    <property type="project" value="UniProtKB-UniRule"/>
</dbReference>
<dbReference type="GO" id="GO:0045892">
    <property type="term" value="P:negative regulation of DNA-templated transcription"/>
    <property type="evidence" value="ECO:0007669"/>
    <property type="project" value="UniProtKB-UniRule"/>
</dbReference>
<dbReference type="FunFam" id="1.10.10.10:FF:000001">
    <property type="entry name" value="LysR family transcriptional regulator"/>
    <property type="match status" value="1"/>
</dbReference>
<dbReference type="Gene3D" id="3.40.190.10">
    <property type="entry name" value="Periplasmic binding protein-like II"/>
    <property type="match status" value="2"/>
</dbReference>
<dbReference type="Gene3D" id="1.10.10.10">
    <property type="entry name" value="Winged helix-like DNA-binding domain superfamily/Winged helix DNA-binding domain"/>
    <property type="match status" value="1"/>
</dbReference>
<dbReference type="HAMAP" id="MF_01233">
    <property type="entry name" value="HTH_type_HdfR"/>
    <property type="match status" value="1"/>
</dbReference>
<dbReference type="InterPro" id="IPR050176">
    <property type="entry name" value="LTTR"/>
</dbReference>
<dbReference type="InterPro" id="IPR005119">
    <property type="entry name" value="LysR_subst-bd"/>
</dbReference>
<dbReference type="InterPro" id="IPR020890">
    <property type="entry name" value="Tscrpt_reg_HTH_HdfR"/>
</dbReference>
<dbReference type="InterPro" id="IPR000847">
    <property type="entry name" value="Tscrpt_reg_HTH_LysR"/>
</dbReference>
<dbReference type="InterPro" id="IPR036388">
    <property type="entry name" value="WH-like_DNA-bd_sf"/>
</dbReference>
<dbReference type="InterPro" id="IPR036390">
    <property type="entry name" value="WH_DNA-bd_sf"/>
</dbReference>
<dbReference type="NCBIfam" id="NF002946">
    <property type="entry name" value="PRK03601.1"/>
    <property type="match status" value="1"/>
</dbReference>
<dbReference type="PANTHER" id="PTHR30579:SF8">
    <property type="entry name" value="HTH-TYPE TRANSCRIPTIONAL REGULATOR HDFR"/>
    <property type="match status" value="1"/>
</dbReference>
<dbReference type="PANTHER" id="PTHR30579">
    <property type="entry name" value="TRANSCRIPTIONAL REGULATOR"/>
    <property type="match status" value="1"/>
</dbReference>
<dbReference type="Pfam" id="PF00126">
    <property type="entry name" value="HTH_1"/>
    <property type="match status" value="1"/>
</dbReference>
<dbReference type="Pfam" id="PF03466">
    <property type="entry name" value="LysR_substrate"/>
    <property type="match status" value="1"/>
</dbReference>
<dbReference type="PRINTS" id="PR00039">
    <property type="entry name" value="HTHLYSR"/>
</dbReference>
<dbReference type="SUPFAM" id="SSF53850">
    <property type="entry name" value="Periplasmic binding protein-like II"/>
    <property type="match status" value="1"/>
</dbReference>
<dbReference type="SUPFAM" id="SSF46785">
    <property type="entry name" value="Winged helix' DNA-binding domain"/>
    <property type="match status" value="1"/>
</dbReference>
<dbReference type="PROSITE" id="PS50931">
    <property type="entry name" value="HTH_LYSR"/>
    <property type="match status" value="1"/>
</dbReference>
<name>HDFR_ECOL6</name>
<proteinExistence type="inferred from homology"/>
<gene>
    <name evidence="1" type="primary">hdfR</name>
    <name type="ordered locus">c4685</name>
</gene>
<comment type="function">
    <text evidence="1">Negatively regulates the transcription of the flagellar master operon flhDC by binding to the upstream region of the operon.</text>
</comment>
<comment type="similarity">
    <text evidence="2">Belongs to the LysR transcriptional regulatory family.</text>
</comment>
<evidence type="ECO:0000255" key="1">
    <source>
        <dbReference type="HAMAP-Rule" id="MF_01233"/>
    </source>
</evidence>
<evidence type="ECO:0000305" key="2"/>
<protein>
    <recommendedName>
        <fullName evidence="1">HTH-type transcriptional regulator HdfR</fullName>
    </recommendedName>
    <alternativeName>
        <fullName evidence="1">H-NS-dependent flhDC regulator</fullName>
    </alternativeName>
</protein>
<organism>
    <name type="scientific">Escherichia coli O6:H1 (strain CFT073 / ATCC 700928 / UPEC)</name>
    <dbReference type="NCBI Taxonomy" id="199310"/>
    <lineage>
        <taxon>Bacteria</taxon>
        <taxon>Pseudomonadati</taxon>
        <taxon>Pseudomonadota</taxon>
        <taxon>Gammaproteobacteria</taxon>
        <taxon>Enterobacterales</taxon>
        <taxon>Enterobacteriaceae</taxon>
        <taxon>Escherichia</taxon>
    </lineage>
</organism>
<feature type="chain" id="PRO_0000105633" description="HTH-type transcriptional regulator HdfR">
    <location>
        <begin position="1"/>
        <end position="279"/>
    </location>
</feature>
<feature type="domain" description="HTH lysR-type" evidence="1">
    <location>
        <begin position="1"/>
        <end position="58"/>
    </location>
</feature>
<feature type="DNA-binding region" description="H-T-H motif" evidence="1">
    <location>
        <begin position="18"/>
        <end position="37"/>
    </location>
</feature>
<accession>P59369</accession>